<feature type="chain" id="PRO_1000200413" description="DNA gyrase inhibitor YacG">
    <location>
        <begin position="1"/>
        <end position="69"/>
    </location>
</feature>
<feature type="region of interest" description="Disordered" evidence="2">
    <location>
        <begin position="1"/>
        <end position="28"/>
    </location>
</feature>
<feature type="binding site" evidence="1">
    <location>
        <position position="21"/>
    </location>
    <ligand>
        <name>Zn(2+)</name>
        <dbReference type="ChEBI" id="CHEBI:29105"/>
    </ligand>
</feature>
<feature type="binding site" evidence="1">
    <location>
        <position position="24"/>
    </location>
    <ligand>
        <name>Zn(2+)</name>
        <dbReference type="ChEBI" id="CHEBI:29105"/>
    </ligand>
</feature>
<feature type="binding site" evidence="1">
    <location>
        <position position="36"/>
    </location>
    <ligand>
        <name>Zn(2+)</name>
        <dbReference type="ChEBI" id="CHEBI:29105"/>
    </ligand>
</feature>
<feature type="binding site" evidence="1">
    <location>
        <position position="40"/>
    </location>
    <ligand>
        <name>Zn(2+)</name>
        <dbReference type="ChEBI" id="CHEBI:29105"/>
    </ligand>
</feature>
<accession>C3MFX7</accession>
<reference key="1">
    <citation type="journal article" date="2009" name="Appl. Environ. Microbiol.">
        <title>Rhizobium sp. strain NGR234 possesses a remarkable number of secretion systems.</title>
        <authorList>
            <person name="Schmeisser C."/>
            <person name="Liesegang H."/>
            <person name="Krysciak D."/>
            <person name="Bakkou N."/>
            <person name="Le Quere A."/>
            <person name="Wollherr A."/>
            <person name="Heinemeyer I."/>
            <person name="Morgenstern B."/>
            <person name="Pommerening-Roeser A."/>
            <person name="Flores M."/>
            <person name="Palacios R."/>
            <person name="Brenner S."/>
            <person name="Gottschalk G."/>
            <person name="Schmitz R.A."/>
            <person name="Broughton W.J."/>
            <person name="Perret X."/>
            <person name="Strittmatter A.W."/>
            <person name="Streit W.R."/>
        </authorList>
    </citation>
    <scope>NUCLEOTIDE SEQUENCE [LARGE SCALE GENOMIC DNA]</scope>
    <source>
        <strain>NBRC 101917 / NGR234</strain>
    </source>
</reference>
<gene>
    <name evidence="1" type="primary">yacG</name>
    <name type="ordered locus">NGR_c02290</name>
</gene>
<comment type="function">
    <text evidence="1">Inhibits all the catalytic activities of DNA gyrase by preventing its interaction with DNA. Acts by binding directly to the C-terminal domain of GyrB, which probably disrupts DNA binding by the gyrase.</text>
</comment>
<comment type="cofactor">
    <cofactor evidence="1">
        <name>Zn(2+)</name>
        <dbReference type="ChEBI" id="CHEBI:29105"/>
    </cofactor>
    <text evidence="1">Binds 1 zinc ion.</text>
</comment>
<comment type="subunit">
    <text evidence="1">Interacts with GyrB.</text>
</comment>
<comment type="similarity">
    <text evidence="1">Belongs to the DNA gyrase inhibitor YacG family.</text>
</comment>
<organism>
    <name type="scientific">Sinorhizobium fredii (strain NBRC 101917 / NGR234)</name>
    <dbReference type="NCBI Taxonomy" id="394"/>
    <lineage>
        <taxon>Bacteria</taxon>
        <taxon>Pseudomonadati</taxon>
        <taxon>Pseudomonadota</taxon>
        <taxon>Alphaproteobacteria</taxon>
        <taxon>Hyphomicrobiales</taxon>
        <taxon>Rhizobiaceae</taxon>
        <taxon>Sinorhizobium/Ensifer group</taxon>
        <taxon>Sinorhizobium</taxon>
    </lineage>
</organism>
<evidence type="ECO:0000255" key="1">
    <source>
        <dbReference type="HAMAP-Rule" id="MF_00649"/>
    </source>
</evidence>
<evidence type="ECO:0000256" key="2">
    <source>
        <dbReference type="SAM" id="MobiDB-lite"/>
    </source>
</evidence>
<proteinExistence type="inferred from homology"/>
<keyword id="KW-0479">Metal-binding</keyword>
<keyword id="KW-1185">Reference proteome</keyword>
<keyword id="KW-0862">Zinc</keyword>
<name>YACG_SINFN</name>
<dbReference type="EMBL" id="CP001389">
    <property type="protein sequence ID" value="ACP24028.1"/>
    <property type="molecule type" value="Genomic_DNA"/>
</dbReference>
<dbReference type="RefSeq" id="WP_012706813.1">
    <property type="nucleotide sequence ID" value="NC_012587.1"/>
</dbReference>
<dbReference type="RefSeq" id="YP_002824781.1">
    <property type="nucleotide sequence ID" value="NC_012587.1"/>
</dbReference>
<dbReference type="SMR" id="C3MFX7"/>
<dbReference type="STRING" id="394.NGR_c02290"/>
<dbReference type="KEGG" id="rhi:NGR_c02290"/>
<dbReference type="PATRIC" id="fig|394.7.peg.3029"/>
<dbReference type="eggNOG" id="COG3024">
    <property type="taxonomic scope" value="Bacteria"/>
</dbReference>
<dbReference type="HOGENOM" id="CLU_178280_2_2_5"/>
<dbReference type="OrthoDB" id="9809663at2"/>
<dbReference type="Proteomes" id="UP000001054">
    <property type="component" value="Chromosome"/>
</dbReference>
<dbReference type="GO" id="GO:0008657">
    <property type="term" value="F:DNA topoisomerase type II (double strand cut, ATP-hydrolyzing) inhibitor activity"/>
    <property type="evidence" value="ECO:0007669"/>
    <property type="project" value="UniProtKB-UniRule"/>
</dbReference>
<dbReference type="GO" id="GO:0008270">
    <property type="term" value="F:zinc ion binding"/>
    <property type="evidence" value="ECO:0007669"/>
    <property type="project" value="UniProtKB-UniRule"/>
</dbReference>
<dbReference type="GO" id="GO:0006355">
    <property type="term" value="P:regulation of DNA-templated transcription"/>
    <property type="evidence" value="ECO:0007669"/>
    <property type="project" value="InterPro"/>
</dbReference>
<dbReference type="Gene3D" id="3.30.50.10">
    <property type="entry name" value="Erythroid Transcription Factor GATA-1, subunit A"/>
    <property type="match status" value="1"/>
</dbReference>
<dbReference type="HAMAP" id="MF_00649">
    <property type="entry name" value="DNA_gyrase_inhibitor_YacG"/>
    <property type="match status" value="1"/>
</dbReference>
<dbReference type="InterPro" id="IPR005584">
    <property type="entry name" value="DNA_gyrase_inhibitor_YacG"/>
</dbReference>
<dbReference type="InterPro" id="IPR013088">
    <property type="entry name" value="Znf_NHR/GATA"/>
</dbReference>
<dbReference type="NCBIfam" id="NF002362">
    <property type="entry name" value="PRK01343.1"/>
    <property type="match status" value="1"/>
</dbReference>
<dbReference type="PANTHER" id="PTHR36150">
    <property type="entry name" value="DNA GYRASE INHIBITOR YACG"/>
    <property type="match status" value="1"/>
</dbReference>
<dbReference type="PANTHER" id="PTHR36150:SF1">
    <property type="entry name" value="DNA GYRASE INHIBITOR YACG"/>
    <property type="match status" value="1"/>
</dbReference>
<dbReference type="Pfam" id="PF03884">
    <property type="entry name" value="YacG"/>
    <property type="match status" value="1"/>
</dbReference>
<dbReference type="SUPFAM" id="SSF57716">
    <property type="entry name" value="Glucocorticoid receptor-like (DNA-binding domain)"/>
    <property type="match status" value="1"/>
</dbReference>
<sequence length="69" mass="7824">MSGEGKKHGSNVEPLRPTRPCPECGRPSVRERYPFCSERCRNVDLNRWLSGSYAIPVADDESKADDEDR</sequence>
<protein>
    <recommendedName>
        <fullName evidence="1">DNA gyrase inhibitor YacG</fullName>
    </recommendedName>
</protein>